<organism>
    <name type="scientific">Prochlorococcus marinus (strain SARG / CCMP1375 / SS120)</name>
    <dbReference type="NCBI Taxonomy" id="167539"/>
    <lineage>
        <taxon>Bacteria</taxon>
        <taxon>Bacillati</taxon>
        <taxon>Cyanobacteriota</taxon>
        <taxon>Cyanophyceae</taxon>
        <taxon>Synechococcales</taxon>
        <taxon>Prochlorococcaceae</taxon>
        <taxon>Prochlorococcus</taxon>
    </lineage>
</organism>
<keyword id="KW-0004">4Fe-4S</keyword>
<keyword id="KW-0408">Iron</keyword>
<keyword id="KW-0411">Iron-sulfur</keyword>
<keyword id="KW-0456">Lyase</keyword>
<keyword id="KW-0460">Magnesium</keyword>
<keyword id="KW-0479">Metal-binding</keyword>
<keyword id="KW-0671">Queuosine biosynthesis</keyword>
<keyword id="KW-1185">Reference proteome</keyword>
<keyword id="KW-0949">S-adenosyl-L-methionine</keyword>
<accession>Q7V9H9</accession>
<proteinExistence type="inferred from homology"/>
<gene>
    <name evidence="1" type="primary">queE</name>
    <name type="ordered locus">Pro_1854</name>
</gene>
<evidence type="ECO:0000255" key="1">
    <source>
        <dbReference type="HAMAP-Rule" id="MF_00917"/>
    </source>
</evidence>
<evidence type="ECO:0000255" key="2">
    <source>
        <dbReference type="PROSITE-ProRule" id="PRU01266"/>
    </source>
</evidence>
<dbReference type="EC" id="4.3.99.3" evidence="1"/>
<dbReference type="EMBL" id="AE017126">
    <property type="protein sequence ID" value="AAQ00898.1"/>
    <property type="molecule type" value="Genomic_DNA"/>
</dbReference>
<dbReference type="RefSeq" id="NP_876245.1">
    <property type="nucleotide sequence ID" value="NC_005042.1"/>
</dbReference>
<dbReference type="RefSeq" id="WP_011126003.1">
    <property type="nucleotide sequence ID" value="NC_005042.1"/>
</dbReference>
<dbReference type="SMR" id="Q7V9H9"/>
<dbReference type="STRING" id="167539.Pro_1854"/>
<dbReference type="EnsemblBacteria" id="AAQ00898">
    <property type="protein sequence ID" value="AAQ00898"/>
    <property type="gene ID" value="Pro_1854"/>
</dbReference>
<dbReference type="KEGG" id="pma:Pro_1854"/>
<dbReference type="PATRIC" id="fig|167539.5.peg.1956"/>
<dbReference type="eggNOG" id="COG0602">
    <property type="taxonomic scope" value="Bacteria"/>
</dbReference>
<dbReference type="HOGENOM" id="CLU_066739_0_1_3"/>
<dbReference type="OrthoDB" id="9792276at2"/>
<dbReference type="UniPathway" id="UPA00391"/>
<dbReference type="Proteomes" id="UP000001420">
    <property type="component" value="Chromosome"/>
</dbReference>
<dbReference type="GO" id="GO:0051539">
    <property type="term" value="F:4 iron, 4 sulfur cluster binding"/>
    <property type="evidence" value="ECO:0007669"/>
    <property type="project" value="UniProtKB-UniRule"/>
</dbReference>
<dbReference type="GO" id="GO:0016840">
    <property type="term" value="F:carbon-nitrogen lyase activity"/>
    <property type="evidence" value="ECO:0007669"/>
    <property type="project" value="UniProtKB-UniRule"/>
</dbReference>
<dbReference type="GO" id="GO:0000287">
    <property type="term" value="F:magnesium ion binding"/>
    <property type="evidence" value="ECO:0007669"/>
    <property type="project" value="UniProtKB-UniRule"/>
</dbReference>
<dbReference type="GO" id="GO:1904047">
    <property type="term" value="F:S-adenosyl-L-methionine binding"/>
    <property type="evidence" value="ECO:0007669"/>
    <property type="project" value="UniProtKB-UniRule"/>
</dbReference>
<dbReference type="GO" id="GO:0008616">
    <property type="term" value="P:queuosine biosynthetic process"/>
    <property type="evidence" value="ECO:0007669"/>
    <property type="project" value="UniProtKB-UniRule"/>
</dbReference>
<dbReference type="Gene3D" id="3.20.20.70">
    <property type="entry name" value="Aldolase class I"/>
    <property type="match status" value="1"/>
</dbReference>
<dbReference type="HAMAP" id="MF_00917">
    <property type="entry name" value="QueE"/>
    <property type="match status" value="1"/>
</dbReference>
<dbReference type="InterPro" id="IPR024924">
    <property type="entry name" value="7-CO-7-deazaguanine_synth-like"/>
</dbReference>
<dbReference type="InterPro" id="IPR013785">
    <property type="entry name" value="Aldolase_TIM"/>
</dbReference>
<dbReference type="InterPro" id="IPR007197">
    <property type="entry name" value="rSAM"/>
</dbReference>
<dbReference type="PANTHER" id="PTHR42836">
    <property type="entry name" value="7-CARBOXY-7-DEAZAGUANINE SYNTHASE"/>
    <property type="match status" value="1"/>
</dbReference>
<dbReference type="PANTHER" id="PTHR42836:SF1">
    <property type="entry name" value="7-CARBOXY-7-DEAZAGUANINE SYNTHASE"/>
    <property type="match status" value="1"/>
</dbReference>
<dbReference type="Pfam" id="PF13353">
    <property type="entry name" value="Fer4_12"/>
    <property type="match status" value="1"/>
</dbReference>
<dbReference type="Pfam" id="PF04055">
    <property type="entry name" value="Radical_SAM"/>
    <property type="match status" value="1"/>
</dbReference>
<dbReference type="PIRSF" id="PIRSF000370">
    <property type="entry name" value="QueE"/>
    <property type="match status" value="1"/>
</dbReference>
<dbReference type="SFLD" id="SFLDS00029">
    <property type="entry name" value="Radical_SAM"/>
    <property type="match status" value="1"/>
</dbReference>
<dbReference type="SUPFAM" id="SSF102114">
    <property type="entry name" value="Radical SAM enzymes"/>
    <property type="match status" value="1"/>
</dbReference>
<dbReference type="PROSITE" id="PS51918">
    <property type="entry name" value="RADICAL_SAM"/>
    <property type="match status" value="1"/>
</dbReference>
<reference key="1">
    <citation type="journal article" date="2003" name="Proc. Natl. Acad. Sci. U.S.A.">
        <title>Genome sequence of the cyanobacterium Prochlorococcus marinus SS120, a nearly minimal oxyphototrophic genome.</title>
        <authorList>
            <person name="Dufresne A."/>
            <person name="Salanoubat M."/>
            <person name="Partensky F."/>
            <person name="Artiguenave F."/>
            <person name="Axmann I.M."/>
            <person name="Barbe V."/>
            <person name="Duprat S."/>
            <person name="Galperin M.Y."/>
            <person name="Koonin E.V."/>
            <person name="Le Gall F."/>
            <person name="Makarova K.S."/>
            <person name="Ostrowski M."/>
            <person name="Oztas S."/>
            <person name="Robert C."/>
            <person name="Rogozin I.B."/>
            <person name="Scanlan D.J."/>
            <person name="Tandeau de Marsac N."/>
            <person name="Weissenbach J."/>
            <person name="Wincker P."/>
            <person name="Wolf Y.I."/>
            <person name="Hess W.R."/>
        </authorList>
    </citation>
    <scope>NUCLEOTIDE SEQUENCE [LARGE SCALE GENOMIC DNA]</scope>
    <source>
        <strain>SARG / CCMP1375 / SS120</strain>
    </source>
</reference>
<sequence length="225" mass="25318">MSTCLPIVERFHSLQGEGLHFGKSAFFIRLGGCKVGCPWCDTKESWSIATHQEATVEELSKEAAIAQSQGAAILVITGGEPLHHNLNALCKTIQDFTSHNSRETMPIHLETSGVDEITGLINWITLSPKRHALPKKSLLRACDEIKVVIHQKEDLLFAEEMANQSIKERQISKKTSDENHKISQPHLFLQPGWNSKEGTQLTIEYIKSHPQWRLSLQTHKWLGVL</sequence>
<comment type="function">
    <text evidence="1">Catalyzes the complex heterocyclic radical-mediated conversion of 6-carboxy-5,6,7,8-tetrahydropterin (CPH4) to 7-carboxy-7-deazaguanine (CDG), a step common to the biosynthetic pathways of all 7-deazapurine-containing compounds.</text>
</comment>
<comment type="catalytic activity">
    <reaction evidence="1">
        <text>6-carboxy-5,6,7,8-tetrahydropterin + H(+) = 7-carboxy-7-deazaguanine + NH4(+)</text>
        <dbReference type="Rhea" id="RHEA:27974"/>
        <dbReference type="ChEBI" id="CHEBI:15378"/>
        <dbReference type="ChEBI" id="CHEBI:28938"/>
        <dbReference type="ChEBI" id="CHEBI:61032"/>
        <dbReference type="ChEBI" id="CHEBI:61036"/>
        <dbReference type="EC" id="4.3.99.3"/>
    </reaction>
</comment>
<comment type="cofactor">
    <cofactor evidence="1">
        <name>[4Fe-4S] cluster</name>
        <dbReference type="ChEBI" id="CHEBI:49883"/>
    </cofactor>
    <text evidence="1">Binds 1 [4Fe-4S] cluster. The cluster is coordinated with 3 cysteines and an exchangeable S-adenosyl-L-methionine.</text>
</comment>
<comment type="cofactor">
    <cofactor evidence="1">
        <name>S-adenosyl-L-methionine</name>
        <dbReference type="ChEBI" id="CHEBI:59789"/>
    </cofactor>
    <text evidence="1">Binds 1 S-adenosyl-L-methionine per subunit.</text>
</comment>
<comment type="cofactor">
    <cofactor evidence="1">
        <name>Mg(2+)</name>
        <dbReference type="ChEBI" id="CHEBI:18420"/>
    </cofactor>
</comment>
<comment type="pathway">
    <text evidence="1">Purine metabolism; 7-cyano-7-deazaguanine biosynthesis.</text>
</comment>
<comment type="subunit">
    <text evidence="1">Homodimer.</text>
</comment>
<comment type="similarity">
    <text evidence="1">Belongs to the radical SAM superfamily. 7-carboxy-7-deazaguanine synthase family.</text>
</comment>
<feature type="chain" id="PRO_0000416210" description="7-carboxy-7-deazaguanine synthase">
    <location>
        <begin position="1"/>
        <end position="225"/>
    </location>
</feature>
<feature type="domain" description="Radical SAM core" evidence="2">
    <location>
        <begin position="20"/>
        <end position="225"/>
    </location>
</feature>
<feature type="binding site" evidence="1">
    <location>
        <begin position="14"/>
        <end position="16"/>
    </location>
    <ligand>
        <name>substrate</name>
    </ligand>
</feature>
<feature type="binding site" evidence="1">
    <location>
        <position position="29"/>
    </location>
    <ligand>
        <name>substrate</name>
    </ligand>
</feature>
<feature type="binding site" evidence="1">
    <location>
        <position position="33"/>
    </location>
    <ligand>
        <name>[4Fe-4S] cluster</name>
        <dbReference type="ChEBI" id="CHEBI:49883"/>
        <note>4Fe-4S-S-AdoMet</note>
    </ligand>
</feature>
<feature type="binding site" evidence="1">
    <location>
        <position position="37"/>
    </location>
    <ligand>
        <name>[4Fe-4S] cluster</name>
        <dbReference type="ChEBI" id="CHEBI:49883"/>
        <note>4Fe-4S-S-AdoMet</note>
    </ligand>
</feature>
<feature type="binding site" evidence="1">
    <location>
        <position position="40"/>
    </location>
    <ligand>
        <name>[4Fe-4S] cluster</name>
        <dbReference type="ChEBI" id="CHEBI:49883"/>
        <note>4Fe-4S-S-AdoMet</note>
    </ligand>
</feature>
<feature type="binding site" evidence="1">
    <location>
        <position position="42"/>
    </location>
    <ligand>
        <name>Mg(2+)</name>
        <dbReference type="ChEBI" id="CHEBI:18420"/>
    </ligand>
</feature>
<feature type="binding site" evidence="1">
    <location>
        <position position="77"/>
    </location>
    <ligand>
        <name>substrate</name>
    </ligand>
</feature>
<feature type="binding site" evidence="1">
    <location>
        <position position="79"/>
    </location>
    <ligand>
        <name>S-adenosyl-L-methionine</name>
        <dbReference type="ChEBI" id="CHEBI:59789"/>
    </ligand>
</feature>
<feature type="binding site" evidence="1">
    <location>
        <begin position="127"/>
        <end position="129"/>
    </location>
    <ligand>
        <name>S-adenosyl-L-methionine</name>
        <dbReference type="ChEBI" id="CHEBI:59789"/>
    </ligand>
</feature>
<protein>
    <recommendedName>
        <fullName evidence="1">7-carboxy-7-deazaguanine synthase</fullName>
        <shortName evidence="1">CDG synthase</shortName>
        <ecNumber evidence="1">4.3.99.3</ecNumber>
    </recommendedName>
    <alternativeName>
        <fullName evidence="1">Queuosine biosynthesis protein QueE</fullName>
    </alternativeName>
</protein>
<name>QUEE_PROMA</name>